<sequence>MIGILLLIGICVAVTVAILYSMYNKIKNSQNPNPSPNLNSPPPEPKNTKFVNNLEKDHISSLYNLVKSSV</sequence>
<protein>
    <recommendedName>
        <fullName>Virion membrane protein OPG139</fullName>
    </recommendedName>
    <alternativeName>
        <fullName>Protein P8</fullName>
    </alternativeName>
</protein>
<name>PG139_VACCW</name>
<organismHost>
    <name type="scientific">Bos taurus</name>
    <name type="common">Bovine</name>
    <dbReference type="NCBI Taxonomy" id="9913"/>
</organismHost>
<feature type="chain" id="PRO_0000414114" description="Virion membrane protein OPG139">
    <location>
        <begin position="1"/>
        <end position="70"/>
    </location>
</feature>
<feature type="transmembrane region" description="Helical" evidence="1">
    <location>
        <begin position="1"/>
        <end position="21"/>
    </location>
</feature>
<feature type="topological domain" description="Virion surface" evidence="1">
    <location>
        <begin position="22"/>
        <end position="70"/>
    </location>
</feature>
<feature type="region of interest" description="Disordered" evidence="2">
    <location>
        <begin position="30"/>
        <end position="50"/>
    </location>
</feature>
<feature type="compositionally biased region" description="Pro residues" evidence="2">
    <location>
        <begin position="33"/>
        <end position="45"/>
    </location>
</feature>
<feature type="modified residue" description="Phosphoserine; by host" evidence="6">
    <location>
        <position position="40"/>
    </location>
</feature>
<feature type="mutagenesis site" description="No effect on phosphorylation." evidence="3">
    <original>S</original>
    <variation>A</variation>
    <location>
        <position position="21"/>
    </location>
</feature>
<feature type="mutagenesis site" description="No effect on phosphorylation." evidence="3">
    <original>S</original>
    <variation>A</variation>
    <location>
        <position position="29"/>
    </location>
</feature>
<feature type="mutagenesis site" description="Complete loss of phosphorylation." evidence="3">
    <original>S</original>
    <variation>A</variation>
    <location>
        <position position="40"/>
    </location>
</feature>
<feature type="mutagenesis site" description="No effect on phosphorylation." evidence="3">
    <original>S</original>
    <variation>A</variation>
    <location>
        <position position="60"/>
    </location>
</feature>
<feature type="mutagenesis site" description="No effect on phosphorylation.">
    <original>S</original>
    <variation>A</variation>
    <location>
        <position position="61"/>
    </location>
</feature>
<feature type="mutagenesis site" description="No effect on phosphorylation." evidence="3">
    <original>S</original>
    <variation>A</variation>
    <location>
        <position position="68"/>
    </location>
</feature>
<feature type="mutagenesis site" description="No effect on phosphorylation." evidence="3">
    <original>S</original>
    <variation>A</variation>
    <location>
        <position position="69"/>
    </location>
</feature>
<comment type="function">
    <text evidence="3">Essential for the encapsidation of DNA into immature virions (IV) and the subsequent maturation of IV into mature virions (MV).</text>
</comment>
<comment type="subcellular location">
    <subcellularLocation>
        <location evidence="4">Virion membrane</location>
        <topology evidence="4">Single-pass membrane protein</topology>
    </subcellularLocation>
    <text evidence="5">Component of the mature virion (MV) membrane. The mature virion is located in the cytoplasm of infected cells and is probably released by cell lysis (Probable).</text>
</comment>
<comment type="induction">
    <text evidence="3">Expressed in the late phase of the viral replicative cycle.</text>
</comment>
<comment type="PTM">
    <text evidence="3">Phosphorylated by a OPG054-independent mechanism.</text>
</comment>
<comment type="similarity">
    <text evidence="5">Belongs to the orthopoxvirus OPG139 family.</text>
</comment>
<proteinExistence type="evidence at protein level"/>
<dbReference type="EMBL" id="AY243312">
    <property type="protein sequence ID" value="AAO89411.1"/>
    <property type="molecule type" value="Genomic_DNA"/>
</dbReference>
<dbReference type="EMBL" id="AJ314915">
    <property type="protein sequence ID" value="CAC42825.1"/>
    <property type="molecule type" value="Genomic_DNA"/>
</dbReference>
<dbReference type="EMBL" id="AJ309902">
    <property type="protein sequence ID" value="CAC85933.1"/>
    <property type="molecule type" value="Genomic_DNA"/>
</dbReference>
<dbReference type="RefSeq" id="YP_233014.1">
    <property type="nucleotide sequence ID" value="NC_006998.1"/>
</dbReference>
<dbReference type="SMR" id="Q76ZQ4"/>
<dbReference type="iPTMnet" id="Q76ZQ4"/>
<dbReference type="ABCD" id="Q76ZQ4">
    <property type="antibodies" value="1 sequenced antibody"/>
</dbReference>
<dbReference type="DNASU" id="3707530"/>
<dbReference type="GeneID" id="3707530"/>
<dbReference type="KEGG" id="vg:3707530"/>
<dbReference type="Proteomes" id="UP000000344">
    <property type="component" value="Genome"/>
</dbReference>
<dbReference type="GO" id="GO:0016020">
    <property type="term" value="C:membrane"/>
    <property type="evidence" value="ECO:0007669"/>
    <property type="project" value="UniProtKB-KW"/>
</dbReference>
<dbReference type="GO" id="GO:0055036">
    <property type="term" value="C:virion membrane"/>
    <property type="evidence" value="ECO:0007669"/>
    <property type="project" value="UniProtKB-SubCell"/>
</dbReference>
<dbReference type="InterPro" id="IPR009236">
    <property type="entry name" value="Chordopox_A13L"/>
</dbReference>
<dbReference type="Pfam" id="PF05961">
    <property type="entry name" value="Chordopox_A13L"/>
    <property type="match status" value="1"/>
</dbReference>
<keyword id="KW-0426">Late protein</keyword>
<keyword id="KW-0472">Membrane</keyword>
<keyword id="KW-0597">Phosphoprotein</keyword>
<keyword id="KW-1185">Reference proteome</keyword>
<keyword id="KW-0812">Transmembrane</keyword>
<keyword id="KW-1133">Transmembrane helix</keyword>
<keyword id="KW-0946">Virion</keyword>
<accession>Q76ZQ4</accession>
<accession>Q711L9</accession>
<evidence type="ECO:0000255" key="1"/>
<evidence type="ECO:0000256" key="2">
    <source>
        <dbReference type="SAM" id="MobiDB-lite"/>
    </source>
</evidence>
<evidence type="ECO:0000269" key="3">
    <source>
    </source>
</evidence>
<evidence type="ECO:0000269" key="4">
    <source>
    </source>
</evidence>
<evidence type="ECO:0000305" key="5"/>
<evidence type="ECO:0000305" key="6">
    <source>
    </source>
</evidence>
<organism>
    <name type="scientific">Vaccinia virus (strain Western Reserve)</name>
    <name type="common">VACV</name>
    <name type="synonym">Vaccinia virus (strain WR)</name>
    <dbReference type="NCBI Taxonomy" id="10254"/>
    <lineage>
        <taxon>Viruses</taxon>
        <taxon>Varidnaviria</taxon>
        <taxon>Bamfordvirae</taxon>
        <taxon>Nucleocytoviricota</taxon>
        <taxon>Pokkesviricetes</taxon>
        <taxon>Chitovirales</taxon>
        <taxon>Poxviridae</taxon>
        <taxon>Chordopoxvirinae</taxon>
        <taxon>Orthopoxvirus</taxon>
        <taxon>Vaccinia virus</taxon>
    </lineage>
</organism>
<reference key="1">
    <citation type="submission" date="2003-02" db="EMBL/GenBank/DDBJ databases">
        <title>Sequencing of the coding region of Vaccinia-WR to an average 9-fold redundancy and an error rate of 0.16/10kb.</title>
        <authorList>
            <person name="Esposito J.J."/>
            <person name="Frace A.M."/>
            <person name="Sammons S.A."/>
            <person name="Olsen-Rasmussen M."/>
            <person name="Osborne J."/>
            <person name="Wohlhueter R."/>
        </authorList>
    </citation>
    <scope>NUCLEOTIDE SEQUENCE [LARGE SCALE GENOMIC DNA]</scope>
</reference>
<reference key="2">
    <citation type="submission" date="2001-06" db="EMBL/GenBank/DDBJ databases">
        <title>Orthologs of the vaccinia virus A13L and A36R virion surface protein genes display diversity in species of the genus Orthopoxvirus.</title>
        <authorList>
            <person name="Pulford D.J."/>
            <person name="Meyer H."/>
            <person name="Ulaeto D."/>
        </authorList>
    </citation>
    <scope>NUCLEOTIDE SEQUENCE [GENOMIC DNA]</scope>
</reference>
<reference key="3">
    <citation type="submission" date="2001-02" db="EMBL/GenBank/DDBJ databases">
        <title>Orthologs of the vaccinia virus A13L and A36R virion surface protein genes display diversity in the species of the genus Orthopoxvirus.</title>
        <authorList>
            <person name="Pulford D.J."/>
            <person name="Meyer H."/>
            <person name="Ulaeto D."/>
        </authorList>
    </citation>
    <scope>NUCLEOTIDE SEQUENCE [GENOMIC DNA]</scope>
    <source>
        <strain>Elstree</strain>
    </source>
</reference>
<reference key="4">
    <citation type="journal article" date="1996" name="J. Virol.">
        <title>Identification of the major membrane and core proteins of vaccinia virus by two-dimensional electrophoresis.</title>
        <authorList>
            <person name="Jensen O.N."/>
            <person name="Houthaeve T."/>
            <person name="Shevchenko A."/>
            <person name="Cudmore S."/>
            <person name="Ashford T."/>
            <person name="Mann M."/>
            <person name="Griffiths G."/>
            <person name="Krijnse Locker J."/>
        </authorList>
    </citation>
    <scope>SUBCELLULAR LOCATION</scope>
</reference>
<reference key="5">
    <citation type="journal article" date="2004" name="J. Virol.">
        <title>Vaccinia virus morphogenesis: a13 phosphoprotein is required for assembly of mature virions.</title>
        <authorList>
            <person name="Unger B."/>
            <person name="Traktman P."/>
        </authorList>
    </citation>
    <scope>PHOSPHORYLATION AT SER-40</scope>
    <scope>INDUCTION</scope>
    <scope>MUTAGENESIS OF SER-21; SER-29; SER-40; SER-60; SER-68 AND SER-69</scope>
    <scope>FUNCTION</scope>
</reference>
<gene>
    <name type="primary">OPG139</name>
    <name type="ordered locus">A13L</name>
</gene>